<keyword id="KW-0687">Ribonucleoprotein</keyword>
<keyword id="KW-0689">Ribosomal protein</keyword>
<keyword id="KW-0694">RNA-binding</keyword>
<keyword id="KW-0699">rRNA-binding</keyword>
<accession>B2RLY3</accession>
<protein>
    <recommendedName>
        <fullName evidence="1">Small ribosomal subunit protein uS17</fullName>
    </recommendedName>
    <alternativeName>
        <fullName evidence="2">30S ribosomal protein S17</fullName>
    </alternativeName>
</protein>
<dbReference type="EMBL" id="AP009380">
    <property type="protein sequence ID" value="BAG34378.1"/>
    <property type="molecule type" value="Genomic_DNA"/>
</dbReference>
<dbReference type="RefSeq" id="WP_004583589.1">
    <property type="nucleotide sequence ID" value="NZ_CP025930.1"/>
</dbReference>
<dbReference type="SMR" id="B2RLY3"/>
<dbReference type="GeneID" id="57239587"/>
<dbReference type="KEGG" id="pgn:PGN_1859"/>
<dbReference type="eggNOG" id="COG0186">
    <property type="taxonomic scope" value="Bacteria"/>
</dbReference>
<dbReference type="HOGENOM" id="CLU_073626_1_0_10"/>
<dbReference type="OrthoDB" id="9811714at2"/>
<dbReference type="BioCyc" id="PGIN431947:G1G2V-2073-MONOMER"/>
<dbReference type="Proteomes" id="UP000008842">
    <property type="component" value="Chromosome"/>
</dbReference>
<dbReference type="GO" id="GO:0022627">
    <property type="term" value="C:cytosolic small ribosomal subunit"/>
    <property type="evidence" value="ECO:0007669"/>
    <property type="project" value="TreeGrafter"/>
</dbReference>
<dbReference type="GO" id="GO:0019843">
    <property type="term" value="F:rRNA binding"/>
    <property type="evidence" value="ECO:0007669"/>
    <property type="project" value="UniProtKB-UniRule"/>
</dbReference>
<dbReference type="GO" id="GO:0003735">
    <property type="term" value="F:structural constituent of ribosome"/>
    <property type="evidence" value="ECO:0007669"/>
    <property type="project" value="InterPro"/>
</dbReference>
<dbReference type="GO" id="GO:0006412">
    <property type="term" value="P:translation"/>
    <property type="evidence" value="ECO:0007669"/>
    <property type="project" value="UniProtKB-UniRule"/>
</dbReference>
<dbReference type="CDD" id="cd00364">
    <property type="entry name" value="Ribosomal_uS17"/>
    <property type="match status" value="1"/>
</dbReference>
<dbReference type="FunFam" id="2.40.50.140:FF:000123">
    <property type="entry name" value="30S ribosomal protein S17"/>
    <property type="match status" value="1"/>
</dbReference>
<dbReference type="Gene3D" id="2.40.50.140">
    <property type="entry name" value="Nucleic acid-binding proteins"/>
    <property type="match status" value="1"/>
</dbReference>
<dbReference type="HAMAP" id="MF_01345_B">
    <property type="entry name" value="Ribosomal_uS17_B"/>
    <property type="match status" value="1"/>
</dbReference>
<dbReference type="InterPro" id="IPR012340">
    <property type="entry name" value="NA-bd_OB-fold"/>
</dbReference>
<dbReference type="InterPro" id="IPR000266">
    <property type="entry name" value="Ribosomal_uS17"/>
</dbReference>
<dbReference type="InterPro" id="IPR019984">
    <property type="entry name" value="Ribosomal_uS17_bact/chlr"/>
</dbReference>
<dbReference type="InterPro" id="IPR019979">
    <property type="entry name" value="Ribosomal_uS17_CS"/>
</dbReference>
<dbReference type="NCBIfam" id="NF004123">
    <property type="entry name" value="PRK05610.1"/>
    <property type="match status" value="1"/>
</dbReference>
<dbReference type="NCBIfam" id="TIGR03635">
    <property type="entry name" value="uS17_bact"/>
    <property type="match status" value="1"/>
</dbReference>
<dbReference type="PANTHER" id="PTHR10744">
    <property type="entry name" value="40S RIBOSOMAL PROTEIN S11 FAMILY MEMBER"/>
    <property type="match status" value="1"/>
</dbReference>
<dbReference type="PANTHER" id="PTHR10744:SF1">
    <property type="entry name" value="SMALL RIBOSOMAL SUBUNIT PROTEIN US17M"/>
    <property type="match status" value="1"/>
</dbReference>
<dbReference type="Pfam" id="PF00366">
    <property type="entry name" value="Ribosomal_S17"/>
    <property type="match status" value="1"/>
</dbReference>
<dbReference type="PRINTS" id="PR00973">
    <property type="entry name" value="RIBOSOMALS17"/>
</dbReference>
<dbReference type="SUPFAM" id="SSF50249">
    <property type="entry name" value="Nucleic acid-binding proteins"/>
    <property type="match status" value="1"/>
</dbReference>
<dbReference type="PROSITE" id="PS00056">
    <property type="entry name" value="RIBOSOMAL_S17"/>
    <property type="match status" value="1"/>
</dbReference>
<name>RS17_PORG3</name>
<sequence>MERNLRKERVGVVSSNKMDKTITVAVKWKEKHPIYGKFVNKTKKYHAHDEKNECGIGDTVRIMETRPLSRTKRWRLTEIIERAK</sequence>
<comment type="function">
    <text evidence="1">One of the primary rRNA binding proteins, it binds specifically to the 5'-end of 16S ribosomal RNA.</text>
</comment>
<comment type="subunit">
    <text evidence="1">Part of the 30S ribosomal subunit.</text>
</comment>
<comment type="similarity">
    <text evidence="1">Belongs to the universal ribosomal protein uS17 family.</text>
</comment>
<gene>
    <name evidence="1" type="primary">rpsQ</name>
    <name type="ordered locus">PGN_1859</name>
</gene>
<evidence type="ECO:0000255" key="1">
    <source>
        <dbReference type="HAMAP-Rule" id="MF_01345"/>
    </source>
</evidence>
<evidence type="ECO:0000305" key="2"/>
<reference key="1">
    <citation type="journal article" date="2008" name="DNA Res.">
        <title>Determination of the genome sequence of Porphyromonas gingivalis strain ATCC 33277 and genomic comparison with strain W83 revealed extensive genome rearrangements in P. gingivalis.</title>
        <authorList>
            <person name="Naito M."/>
            <person name="Hirakawa H."/>
            <person name="Yamashita A."/>
            <person name="Ohara N."/>
            <person name="Shoji M."/>
            <person name="Yukitake H."/>
            <person name="Nakayama K."/>
            <person name="Toh H."/>
            <person name="Yoshimura F."/>
            <person name="Kuhara S."/>
            <person name="Hattori M."/>
            <person name="Hayashi T."/>
            <person name="Nakayama K."/>
        </authorList>
    </citation>
    <scope>NUCLEOTIDE SEQUENCE [LARGE SCALE GENOMIC DNA]</scope>
    <source>
        <strain>ATCC 33277 / DSM 20709 / CIP 103683 / JCM 12257 / NCTC 11834 / 2561</strain>
    </source>
</reference>
<organism>
    <name type="scientific">Porphyromonas gingivalis (strain ATCC 33277 / DSM 20709 / CIP 103683 / JCM 12257 / NCTC 11834 / 2561)</name>
    <dbReference type="NCBI Taxonomy" id="431947"/>
    <lineage>
        <taxon>Bacteria</taxon>
        <taxon>Pseudomonadati</taxon>
        <taxon>Bacteroidota</taxon>
        <taxon>Bacteroidia</taxon>
        <taxon>Bacteroidales</taxon>
        <taxon>Porphyromonadaceae</taxon>
        <taxon>Porphyromonas</taxon>
    </lineage>
</organism>
<feature type="chain" id="PRO_1000143285" description="Small ribosomal subunit protein uS17">
    <location>
        <begin position="1"/>
        <end position="84"/>
    </location>
</feature>
<proteinExistence type="inferred from homology"/>